<name>COXX_STAA2</name>
<keyword id="KW-1003">Cell membrane</keyword>
<keyword id="KW-0350">Heme biosynthesis</keyword>
<keyword id="KW-0472">Membrane</keyword>
<keyword id="KW-0808">Transferase</keyword>
<keyword id="KW-0812">Transmembrane</keyword>
<keyword id="KW-1133">Transmembrane helix</keyword>
<evidence type="ECO:0000255" key="1">
    <source>
        <dbReference type="HAMAP-Rule" id="MF_00154"/>
    </source>
</evidence>
<gene>
    <name evidence="1" type="primary">ctaB</name>
    <name type="ordered locus">SaurJH1_1198</name>
</gene>
<reference key="1">
    <citation type="submission" date="2007-06" db="EMBL/GenBank/DDBJ databases">
        <title>Complete sequence of chromosome of Staphylococcus aureus subsp. aureus JH1.</title>
        <authorList>
            <consortium name="US DOE Joint Genome Institute"/>
            <person name="Copeland A."/>
            <person name="Lucas S."/>
            <person name="Lapidus A."/>
            <person name="Barry K."/>
            <person name="Detter J.C."/>
            <person name="Glavina del Rio T."/>
            <person name="Hammon N."/>
            <person name="Israni S."/>
            <person name="Dalin E."/>
            <person name="Tice H."/>
            <person name="Pitluck S."/>
            <person name="Chain P."/>
            <person name="Malfatti S."/>
            <person name="Shin M."/>
            <person name="Vergez L."/>
            <person name="Schmutz J."/>
            <person name="Larimer F."/>
            <person name="Land M."/>
            <person name="Hauser L."/>
            <person name="Kyrpides N."/>
            <person name="Ivanova N."/>
            <person name="Tomasz A."/>
            <person name="Richardson P."/>
        </authorList>
    </citation>
    <scope>NUCLEOTIDE SEQUENCE [LARGE SCALE GENOMIC DNA]</scope>
    <source>
        <strain>JH1</strain>
    </source>
</reference>
<feature type="chain" id="PRO_0000346074" description="Protoheme IX farnesyltransferase">
    <location>
        <begin position="1"/>
        <end position="303"/>
    </location>
</feature>
<feature type="transmembrane region" description="Helical" evidence="1">
    <location>
        <begin position="25"/>
        <end position="45"/>
    </location>
</feature>
<feature type="transmembrane region" description="Helical" evidence="1">
    <location>
        <begin position="54"/>
        <end position="74"/>
    </location>
</feature>
<feature type="transmembrane region" description="Helical" evidence="1">
    <location>
        <begin position="104"/>
        <end position="124"/>
    </location>
</feature>
<feature type="transmembrane region" description="Helical" evidence="1">
    <location>
        <begin position="125"/>
        <end position="145"/>
    </location>
</feature>
<feature type="transmembrane region" description="Helical" evidence="1">
    <location>
        <begin position="151"/>
        <end position="171"/>
    </location>
</feature>
<feature type="transmembrane region" description="Helical" evidence="1">
    <location>
        <begin position="179"/>
        <end position="199"/>
    </location>
</feature>
<feature type="transmembrane region" description="Helical" evidence="1">
    <location>
        <begin position="227"/>
        <end position="247"/>
    </location>
</feature>
<feature type="transmembrane region" description="Helical" evidence="1">
    <location>
        <begin position="248"/>
        <end position="268"/>
    </location>
</feature>
<feature type="transmembrane region" description="Helical" evidence="1">
    <location>
        <begin position="280"/>
        <end position="300"/>
    </location>
</feature>
<protein>
    <recommendedName>
        <fullName evidence="1">Protoheme IX farnesyltransferase</fullName>
        <ecNumber evidence="1">2.5.1.141</ecNumber>
    </recommendedName>
    <alternativeName>
        <fullName evidence="1">Heme B farnesyltransferase</fullName>
    </alternativeName>
    <alternativeName>
        <fullName evidence="1">Heme O synthase</fullName>
    </alternativeName>
</protein>
<organism>
    <name type="scientific">Staphylococcus aureus (strain JH1)</name>
    <dbReference type="NCBI Taxonomy" id="359787"/>
    <lineage>
        <taxon>Bacteria</taxon>
        <taxon>Bacillati</taxon>
        <taxon>Bacillota</taxon>
        <taxon>Bacilli</taxon>
        <taxon>Bacillales</taxon>
        <taxon>Staphylococcaceae</taxon>
        <taxon>Staphylococcus</taxon>
    </lineage>
</organism>
<dbReference type="EC" id="2.5.1.141" evidence="1"/>
<dbReference type="EMBL" id="CP000736">
    <property type="protein sequence ID" value="ABR52052.1"/>
    <property type="molecule type" value="Genomic_DNA"/>
</dbReference>
<dbReference type="SMR" id="A6U0T4"/>
<dbReference type="KEGG" id="sah:SaurJH1_1198"/>
<dbReference type="HOGENOM" id="CLU_029631_0_0_9"/>
<dbReference type="UniPathway" id="UPA00834">
    <property type="reaction ID" value="UER00712"/>
</dbReference>
<dbReference type="GO" id="GO:0005886">
    <property type="term" value="C:plasma membrane"/>
    <property type="evidence" value="ECO:0007669"/>
    <property type="project" value="UniProtKB-SubCell"/>
</dbReference>
<dbReference type="GO" id="GO:0008495">
    <property type="term" value="F:protoheme IX farnesyltransferase activity"/>
    <property type="evidence" value="ECO:0007669"/>
    <property type="project" value="UniProtKB-UniRule"/>
</dbReference>
<dbReference type="GO" id="GO:0048034">
    <property type="term" value="P:heme O biosynthetic process"/>
    <property type="evidence" value="ECO:0007669"/>
    <property type="project" value="UniProtKB-UniRule"/>
</dbReference>
<dbReference type="CDD" id="cd13957">
    <property type="entry name" value="PT_UbiA_Cox10"/>
    <property type="match status" value="1"/>
</dbReference>
<dbReference type="Gene3D" id="1.10.357.140">
    <property type="entry name" value="UbiA prenyltransferase"/>
    <property type="match status" value="1"/>
</dbReference>
<dbReference type="HAMAP" id="MF_00154">
    <property type="entry name" value="CyoE_CtaB"/>
    <property type="match status" value="1"/>
</dbReference>
<dbReference type="InterPro" id="IPR006369">
    <property type="entry name" value="Protohaem_IX_farnesylTrfase"/>
</dbReference>
<dbReference type="InterPro" id="IPR000537">
    <property type="entry name" value="UbiA_prenyltransferase"/>
</dbReference>
<dbReference type="InterPro" id="IPR044878">
    <property type="entry name" value="UbiA_sf"/>
</dbReference>
<dbReference type="NCBIfam" id="TIGR01473">
    <property type="entry name" value="cyoE_ctaB"/>
    <property type="match status" value="1"/>
</dbReference>
<dbReference type="PANTHER" id="PTHR43448">
    <property type="entry name" value="PROTOHEME IX FARNESYLTRANSFERASE, MITOCHONDRIAL"/>
    <property type="match status" value="1"/>
</dbReference>
<dbReference type="PANTHER" id="PTHR43448:SF2">
    <property type="entry name" value="PROTOHEME IX FARNESYLTRANSFERASE, MITOCHONDRIAL"/>
    <property type="match status" value="1"/>
</dbReference>
<dbReference type="Pfam" id="PF01040">
    <property type="entry name" value="UbiA"/>
    <property type="match status" value="1"/>
</dbReference>
<accession>A6U0T4</accession>
<comment type="function">
    <text evidence="1">Converts heme B (protoheme IX) to heme O by substitution of the vinyl group on carbon 2 of heme B porphyrin ring with a hydroxyethyl farnesyl side group.</text>
</comment>
<comment type="catalytic activity">
    <reaction evidence="1">
        <text>heme b + (2E,6E)-farnesyl diphosphate + H2O = Fe(II)-heme o + diphosphate</text>
        <dbReference type="Rhea" id="RHEA:28070"/>
        <dbReference type="ChEBI" id="CHEBI:15377"/>
        <dbReference type="ChEBI" id="CHEBI:33019"/>
        <dbReference type="ChEBI" id="CHEBI:60344"/>
        <dbReference type="ChEBI" id="CHEBI:60530"/>
        <dbReference type="ChEBI" id="CHEBI:175763"/>
        <dbReference type="EC" id="2.5.1.141"/>
    </reaction>
</comment>
<comment type="pathway">
    <text evidence="1">Porphyrin-containing compound metabolism; heme O biosynthesis; heme O from protoheme: step 1/1.</text>
</comment>
<comment type="subunit">
    <text evidence="1">Interacts with CtaA.</text>
</comment>
<comment type="subcellular location">
    <subcellularLocation>
        <location evidence="1">Cell membrane</location>
        <topology evidence="1">Multi-pass membrane protein</topology>
    </subcellularLocation>
</comment>
<comment type="miscellaneous">
    <text evidence="1">Carbon 2 of the heme B porphyrin ring is defined according to the Fischer nomenclature.</text>
</comment>
<comment type="similarity">
    <text evidence="1">Belongs to the UbiA prenyltransferase family. Protoheme IX farnesyltransferase subfamily.</text>
</comment>
<proteinExistence type="inferred from homology"/>
<sequence length="303" mass="33859">MSKEHTLSQNISRVNFKELQQIIKMGLVQGNLIPAFAGAWLAVVMTNHSFLSSIPQILLMLFGSTLIMGGACALNNYYDQDIDRIMPSKQNRPTVNNRITDQNLLLLSFGMMLVGEICLFLLNIPSGVLGLMGIVGYVSYYSIWSKRHTTWNTVIGSFPGAVPPLIGWVAIEGQISLTAIALFLVVFCWQPIHFYALAIKRKDEYALANIPMLPSVKGFKRTRVSMFIWLIILLPVPLLLINLGVVFVVLATLLNLGWIALGLTTFKKNSDQTKWATQMFIYSLNYLVIFFVLAVIVSLLTLI</sequence>